<feature type="signal peptide" evidence="2">
    <location>
        <begin position="1"/>
        <end position="22"/>
    </location>
</feature>
<feature type="chain" id="PRO_0000382747" description="Serine/threonine-protein kinase-like protein CCR2">
    <location>
        <begin position="23"/>
        <end position="776"/>
    </location>
</feature>
<feature type="topological domain" description="Extracellular" evidence="2">
    <location>
        <begin position="23"/>
        <end position="432"/>
    </location>
</feature>
<feature type="transmembrane region" description="Helical" evidence="2">
    <location>
        <begin position="433"/>
        <end position="453"/>
    </location>
</feature>
<feature type="topological domain" description="Cytoplasmic" evidence="2">
    <location>
        <begin position="454"/>
        <end position="776"/>
    </location>
</feature>
<feature type="repeat" description="TNFR-Cys">
    <location>
        <begin position="341"/>
        <end position="396"/>
    </location>
</feature>
<feature type="domain" description="Protein kinase" evidence="3">
    <location>
        <begin position="519"/>
        <end position="776"/>
    </location>
</feature>
<feature type="active site" description="Proton acceptor" evidence="3 4">
    <location>
        <position position="644"/>
    </location>
</feature>
<feature type="binding site" evidence="3">
    <location>
        <begin position="525"/>
        <end position="533"/>
    </location>
    <ligand>
        <name>ATP</name>
        <dbReference type="ChEBI" id="CHEBI:30616"/>
    </ligand>
</feature>
<feature type="binding site" evidence="3">
    <location>
        <position position="547"/>
    </location>
    <ligand>
        <name>ATP</name>
        <dbReference type="ChEBI" id="CHEBI:30616"/>
    </ligand>
</feature>
<feature type="glycosylation site" description="N-linked (GlcNAc...) asparagine" evidence="2">
    <location>
        <position position="59"/>
    </location>
</feature>
<feature type="glycosylation site" description="N-linked (GlcNAc...) asparagine" evidence="2">
    <location>
        <position position="92"/>
    </location>
</feature>
<feature type="glycosylation site" description="N-linked (GlcNAc...) asparagine" evidence="2">
    <location>
        <position position="154"/>
    </location>
</feature>
<feature type="glycosylation site" description="N-linked (GlcNAc...) asparagine" evidence="2">
    <location>
        <position position="162"/>
    </location>
</feature>
<feature type="glycosylation site" description="N-linked (GlcNAc...) asparagine" evidence="2">
    <location>
        <position position="205"/>
    </location>
</feature>
<feature type="glycosylation site" description="N-linked (GlcNAc...) asparagine" evidence="2">
    <location>
        <position position="278"/>
    </location>
</feature>
<feature type="glycosylation site" description="N-linked (GlcNAc...) asparagine" evidence="2">
    <location>
        <position position="287"/>
    </location>
</feature>
<feature type="glycosylation site" description="N-linked (GlcNAc...) asparagine" evidence="2">
    <location>
        <position position="350"/>
    </location>
</feature>
<feature type="glycosylation site" description="N-linked (GlcNAc...) asparagine" evidence="2">
    <location>
        <position position="404"/>
    </location>
</feature>
<feature type="disulfide bond" evidence="1">
    <location>
        <begin position="342"/>
        <end position="371"/>
    </location>
</feature>
<feature type="disulfide bond" evidence="1">
    <location>
        <begin position="374"/>
        <end position="388"/>
    </location>
</feature>
<feature type="disulfide bond" evidence="1">
    <location>
        <begin position="378"/>
        <end position="396"/>
    </location>
</feature>
<gene>
    <name type="primary">CCR2</name>
    <name type="synonym">CRR2</name>
    <name type="ordered locus">At2g39180</name>
    <name type="ORF">T16B24.18</name>
</gene>
<proteinExistence type="evidence at protein level"/>
<keyword id="KW-0067">ATP-binding</keyword>
<keyword id="KW-1015">Disulfide bond</keyword>
<keyword id="KW-0325">Glycoprotein</keyword>
<keyword id="KW-0418">Kinase</keyword>
<keyword id="KW-0472">Membrane</keyword>
<keyword id="KW-0547">Nucleotide-binding</keyword>
<keyword id="KW-0675">Receptor</keyword>
<keyword id="KW-1185">Reference proteome</keyword>
<keyword id="KW-0723">Serine/threonine-protein kinase</keyword>
<keyword id="KW-0732">Signal</keyword>
<keyword id="KW-0808">Transferase</keyword>
<keyword id="KW-0812">Transmembrane</keyword>
<keyword id="KW-1133">Transmembrane helix</keyword>
<organism>
    <name type="scientific">Arabidopsis thaliana</name>
    <name type="common">Mouse-ear cress</name>
    <dbReference type="NCBI Taxonomy" id="3702"/>
    <lineage>
        <taxon>Eukaryota</taxon>
        <taxon>Viridiplantae</taxon>
        <taxon>Streptophyta</taxon>
        <taxon>Embryophyta</taxon>
        <taxon>Tracheophyta</taxon>
        <taxon>Spermatophyta</taxon>
        <taxon>Magnoliopsida</taxon>
        <taxon>eudicotyledons</taxon>
        <taxon>Gunneridae</taxon>
        <taxon>Pentapetalae</taxon>
        <taxon>rosids</taxon>
        <taxon>malvids</taxon>
        <taxon>Brassicales</taxon>
        <taxon>Brassicaceae</taxon>
        <taxon>Camelineae</taxon>
        <taxon>Arabidopsis</taxon>
    </lineage>
</organism>
<sequence length="776" mass="85303">MQPNSHIFVIITISSLIITVSAYGSTGTIAAAFGENGFFCAIDASGKQEVICWDRGNTNRSLNRPPGEISGYSPPMTSLSGGEGFLCAITSNTSRAFCWNLEDPSENLVPRAFQYNSYLQIASGNNHVCAISGLYYSGPDYGPVHCWEYSDNTNFTSGLLWNSSFHNPYIDSLMFRKIVSGDGFSCGVTKDGDLVCWGPKSNLLNFSNNEEFEVLASGRNSVCGVSKDSGQLHCFGDETEFGSLPNRPRFIALSAGANHYCGIREDDHGVECWGRNLNSSSSSSAPNTSGFVAISSSDSTTCGVRELDLVLDCWRVHDSSKADYSPPLELCSPGMCSPRGNCGDGWFAFNASILKESELTSLCSFHNLNICLRCGISCLEGYFPSSTCNPNADRVCTPCSLCQNSSCYGICKIRATKSKEHEQKEQREVRRLVIIIGCSVLGFLVMLIGLSFIPKMTKGSKRDDEERSKMTCCFCFDKNSVEADPDPVPHQSVLLPTAVSLGETKIFRLSELKDATHGFKEFNELGRGSFGFVYKAVLSDGIHVAVKRANAATIIHSNNRGFESELEILCKIRHNNIVNLLGYCSEMGERLLVYEYMPHGTLHDHLHGDLSQLDWSMRLKIMLQAARGLDYLHNEVDPPIIHRDVKTSNILLDGEMCARIADFGLVSSNERDSSNSDREGDVYDFGIVLLEILSGRKAIDRESDPAGIAEWAVPLIRKGKAAAIIDRNICLPRNVEPLLKLAELAELAVRENSNERPNIRNILCFLDLIVKSGLTF</sequence>
<accession>O80963</accession>
<dbReference type="EC" id="2.7.11.1"/>
<dbReference type="EMBL" id="AC004697">
    <property type="protein sequence ID" value="AAC28989.1"/>
    <property type="molecule type" value="Genomic_DNA"/>
</dbReference>
<dbReference type="EMBL" id="CP002685">
    <property type="protein sequence ID" value="AEC09642.1"/>
    <property type="molecule type" value="Genomic_DNA"/>
</dbReference>
<dbReference type="EMBL" id="AK228187">
    <property type="status" value="NOT_ANNOTATED_CDS"/>
    <property type="molecule type" value="mRNA"/>
</dbReference>
<dbReference type="PIR" id="T02584">
    <property type="entry name" value="T02584"/>
</dbReference>
<dbReference type="RefSeq" id="NP_181451.1">
    <property type="nucleotide sequence ID" value="NM_129475.4"/>
</dbReference>
<dbReference type="SMR" id="O80963"/>
<dbReference type="BioGRID" id="3841">
    <property type="interactions" value="5"/>
</dbReference>
<dbReference type="FunCoup" id="O80963">
    <property type="interactions" value="1"/>
</dbReference>
<dbReference type="IntAct" id="O80963">
    <property type="interactions" value="5"/>
</dbReference>
<dbReference type="STRING" id="3702.O80963"/>
<dbReference type="GlyCosmos" id="O80963">
    <property type="glycosylation" value="9 sites, No reported glycans"/>
</dbReference>
<dbReference type="GlyGen" id="O80963">
    <property type="glycosylation" value="9 sites"/>
</dbReference>
<dbReference type="PaxDb" id="3702-AT2G39180.1"/>
<dbReference type="ProteomicsDB" id="244514"/>
<dbReference type="EnsemblPlants" id="AT2G39180.1">
    <property type="protein sequence ID" value="AT2G39180.1"/>
    <property type="gene ID" value="AT2G39180"/>
</dbReference>
<dbReference type="GeneID" id="818503"/>
<dbReference type="Gramene" id="AT2G39180.1">
    <property type="protein sequence ID" value="AT2G39180.1"/>
    <property type="gene ID" value="AT2G39180"/>
</dbReference>
<dbReference type="KEGG" id="ath:AT2G39180"/>
<dbReference type="Araport" id="AT2G39180"/>
<dbReference type="TAIR" id="AT2G39180">
    <property type="gene designation" value="CCR2"/>
</dbReference>
<dbReference type="eggNOG" id="ENOG502QUN0">
    <property type="taxonomic scope" value="Eukaryota"/>
</dbReference>
<dbReference type="HOGENOM" id="CLU_009948_0_0_1"/>
<dbReference type="InParanoid" id="O80963"/>
<dbReference type="OMA" id="NTSRAFC"/>
<dbReference type="OrthoDB" id="61110at2759"/>
<dbReference type="PhylomeDB" id="O80963"/>
<dbReference type="PRO" id="PR:O80963"/>
<dbReference type="Proteomes" id="UP000006548">
    <property type="component" value="Chromosome 2"/>
</dbReference>
<dbReference type="ExpressionAtlas" id="O80963">
    <property type="expression patterns" value="baseline and differential"/>
</dbReference>
<dbReference type="GO" id="GO:0016020">
    <property type="term" value="C:membrane"/>
    <property type="evidence" value="ECO:0007669"/>
    <property type="project" value="UniProtKB-SubCell"/>
</dbReference>
<dbReference type="GO" id="GO:0005524">
    <property type="term" value="F:ATP binding"/>
    <property type="evidence" value="ECO:0007669"/>
    <property type="project" value="UniProtKB-KW"/>
</dbReference>
<dbReference type="GO" id="GO:0042803">
    <property type="term" value="F:protein homodimerization activity"/>
    <property type="evidence" value="ECO:0000314"/>
    <property type="project" value="UniProtKB"/>
</dbReference>
<dbReference type="GO" id="GO:0004672">
    <property type="term" value="F:protein kinase activity"/>
    <property type="evidence" value="ECO:0000314"/>
    <property type="project" value="UniProtKB"/>
</dbReference>
<dbReference type="GO" id="GO:0106310">
    <property type="term" value="F:protein serine kinase activity"/>
    <property type="evidence" value="ECO:0007669"/>
    <property type="project" value="RHEA"/>
</dbReference>
<dbReference type="GO" id="GO:0004674">
    <property type="term" value="F:protein serine/threonine kinase activity"/>
    <property type="evidence" value="ECO:0007669"/>
    <property type="project" value="UniProtKB-KW"/>
</dbReference>
<dbReference type="FunFam" id="1.10.510.10:FF:000826">
    <property type="entry name" value="Serine/threonine-protein kinase-like protein CCR1"/>
    <property type="match status" value="1"/>
</dbReference>
<dbReference type="FunFam" id="1.10.510.10:FF:000940">
    <property type="entry name" value="Serine/threonine-protein kinase-like protein CCR1"/>
    <property type="match status" value="1"/>
</dbReference>
<dbReference type="FunFam" id="3.30.200.20:FF:000357">
    <property type="entry name" value="serine/threonine-protein kinase-like protein CCR1"/>
    <property type="match status" value="1"/>
</dbReference>
<dbReference type="Gene3D" id="3.30.200.20">
    <property type="entry name" value="Phosphorylase Kinase, domain 1"/>
    <property type="match status" value="1"/>
</dbReference>
<dbReference type="Gene3D" id="2.130.10.30">
    <property type="entry name" value="Regulator of chromosome condensation 1/beta-lactamase-inhibitor protein II"/>
    <property type="match status" value="1"/>
</dbReference>
<dbReference type="Gene3D" id="1.10.510.10">
    <property type="entry name" value="Transferase(Phosphotransferase) domain 1"/>
    <property type="match status" value="2"/>
</dbReference>
<dbReference type="InterPro" id="IPR011009">
    <property type="entry name" value="Kinase-like_dom_sf"/>
</dbReference>
<dbReference type="InterPro" id="IPR000719">
    <property type="entry name" value="Prot_kinase_dom"/>
</dbReference>
<dbReference type="InterPro" id="IPR017441">
    <property type="entry name" value="Protein_kinase_ATP_BS"/>
</dbReference>
<dbReference type="InterPro" id="IPR009091">
    <property type="entry name" value="RCC1/BLIP-II"/>
</dbReference>
<dbReference type="InterPro" id="IPR001245">
    <property type="entry name" value="Ser-Thr/Tyr_kinase_cat_dom"/>
</dbReference>
<dbReference type="InterPro" id="IPR008271">
    <property type="entry name" value="Ser/Thr_kinase_AS"/>
</dbReference>
<dbReference type="PANTHER" id="PTHR47460">
    <property type="entry name" value="SERINE/THREONINE-PROTEIN KINASE-LIKE PROTEIN ACR4"/>
    <property type="match status" value="1"/>
</dbReference>
<dbReference type="PANTHER" id="PTHR47460:SF1">
    <property type="entry name" value="SERINE_THREONINE-PROTEIN KINASE-LIKE PROTEIN ACR4"/>
    <property type="match status" value="1"/>
</dbReference>
<dbReference type="Pfam" id="PF07714">
    <property type="entry name" value="PK_Tyr_Ser-Thr"/>
    <property type="match status" value="1"/>
</dbReference>
<dbReference type="Pfam" id="PF13540">
    <property type="entry name" value="RCC1_2"/>
    <property type="match status" value="1"/>
</dbReference>
<dbReference type="SMART" id="SM00220">
    <property type="entry name" value="S_TKc"/>
    <property type="match status" value="1"/>
</dbReference>
<dbReference type="SUPFAM" id="SSF56112">
    <property type="entry name" value="Protein kinase-like (PK-like)"/>
    <property type="match status" value="1"/>
</dbReference>
<dbReference type="SUPFAM" id="SSF50985">
    <property type="entry name" value="RCC1/BLIP-II"/>
    <property type="match status" value="2"/>
</dbReference>
<dbReference type="PROSITE" id="PS00107">
    <property type="entry name" value="PROTEIN_KINASE_ATP"/>
    <property type="match status" value="1"/>
</dbReference>
<dbReference type="PROSITE" id="PS50011">
    <property type="entry name" value="PROTEIN_KINASE_DOM"/>
    <property type="match status" value="1"/>
</dbReference>
<dbReference type="PROSITE" id="PS00108">
    <property type="entry name" value="PROTEIN_KINASE_ST"/>
    <property type="match status" value="1"/>
</dbReference>
<evidence type="ECO:0000250" key="1"/>
<evidence type="ECO:0000255" key="2"/>
<evidence type="ECO:0000255" key="3">
    <source>
        <dbReference type="PROSITE-ProRule" id="PRU00159"/>
    </source>
</evidence>
<evidence type="ECO:0000255" key="4">
    <source>
        <dbReference type="PROSITE-ProRule" id="PRU10027"/>
    </source>
</evidence>
<evidence type="ECO:0000269" key="5">
    <source>
    </source>
</evidence>
<evidence type="ECO:0000305" key="6"/>
<name>ACCR2_ARATH</name>
<protein>
    <recommendedName>
        <fullName>Serine/threonine-protein kinase-like protein CCR2</fullName>
        <ecNumber>2.7.11.1</ecNumber>
    </recommendedName>
    <alternativeName>
        <fullName>Protein CRINKLY 4 RELATED 2</fullName>
        <shortName>AtCRR2</shortName>
    </alternativeName>
</protein>
<reference key="1">
    <citation type="journal article" date="1999" name="Nature">
        <title>Sequence and analysis of chromosome 2 of the plant Arabidopsis thaliana.</title>
        <authorList>
            <person name="Lin X."/>
            <person name="Kaul S."/>
            <person name="Rounsley S.D."/>
            <person name="Shea T.P."/>
            <person name="Benito M.-I."/>
            <person name="Town C.D."/>
            <person name="Fujii C.Y."/>
            <person name="Mason T.M."/>
            <person name="Bowman C.L."/>
            <person name="Barnstead M.E."/>
            <person name="Feldblyum T.V."/>
            <person name="Buell C.R."/>
            <person name="Ketchum K.A."/>
            <person name="Lee J.J."/>
            <person name="Ronning C.M."/>
            <person name="Koo H.L."/>
            <person name="Moffat K.S."/>
            <person name="Cronin L.A."/>
            <person name="Shen M."/>
            <person name="Pai G."/>
            <person name="Van Aken S."/>
            <person name="Umayam L."/>
            <person name="Tallon L.J."/>
            <person name="Gill J.E."/>
            <person name="Adams M.D."/>
            <person name="Carrera A.J."/>
            <person name="Creasy T.H."/>
            <person name="Goodman H.M."/>
            <person name="Somerville C.R."/>
            <person name="Copenhaver G.P."/>
            <person name="Preuss D."/>
            <person name="Nierman W.C."/>
            <person name="White O."/>
            <person name="Eisen J.A."/>
            <person name="Salzberg S.L."/>
            <person name="Fraser C.M."/>
            <person name="Venter J.C."/>
        </authorList>
    </citation>
    <scope>NUCLEOTIDE SEQUENCE [LARGE SCALE GENOMIC DNA]</scope>
    <source>
        <strain>cv. Columbia</strain>
    </source>
</reference>
<reference key="2">
    <citation type="journal article" date="2017" name="Plant J.">
        <title>Araport11: a complete reannotation of the Arabidopsis thaliana reference genome.</title>
        <authorList>
            <person name="Cheng C.Y."/>
            <person name="Krishnakumar V."/>
            <person name="Chan A.P."/>
            <person name="Thibaud-Nissen F."/>
            <person name="Schobel S."/>
            <person name="Town C.D."/>
        </authorList>
    </citation>
    <scope>GENOME REANNOTATION</scope>
    <source>
        <strain>cv. Columbia</strain>
    </source>
</reference>
<reference key="3">
    <citation type="submission" date="2006-07" db="EMBL/GenBank/DDBJ databases">
        <title>Large-scale analysis of RIKEN Arabidopsis full-length (RAFL) cDNAs.</title>
        <authorList>
            <person name="Totoki Y."/>
            <person name="Seki M."/>
            <person name="Ishida J."/>
            <person name="Nakajima M."/>
            <person name="Enju A."/>
            <person name="Kamiya A."/>
            <person name="Narusaka M."/>
            <person name="Shin-i T."/>
            <person name="Nakagawa M."/>
            <person name="Sakamoto N."/>
            <person name="Oishi K."/>
            <person name="Kohara Y."/>
            <person name="Kobayashi M."/>
            <person name="Toyoda A."/>
            <person name="Sakaki Y."/>
            <person name="Sakurai T."/>
            <person name="Iida K."/>
            <person name="Akiyama K."/>
            <person name="Satou M."/>
            <person name="Toyoda T."/>
            <person name="Konagaya A."/>
            <person name="Carninci P."/>
            <person name="Kawai J."/>
            <person name="Hayashizaki Y."/>
            <person name="Shinozaki K."/>
        </authorList>
    </citation>
    <scope>NUCLEOTIDE SEQUENCE [LARGE SCALE MRNA]</scope>
    <source>
        <strain>cv. Columbia</strain>
    </source>
</reference>
<reference key="4">
    <citation type="journal article" date="2005" name="Planta">
        <title>Molecular analysis of the CRINKLY4 gene family in Arabidopsis thaliana.</title>
        <authorList>
            <person name="Cao X."/>
            <person name="Li K."/>
            <person name="Suh S.-G."/>
            <person name="Guo T."/>
            <person name="Becraft P.W."/>
        </authorList>
    </citation>
    <scope>GENE FAMILY</scope>
    <scope>CATALYTIC ACTIVITY</scope>
    <scope>TISSUE SPECIFICITY</scope>
</reference>
<reference key="5">
    <citation type="journal article" date="2008" name="Arch. Biochem. Biophys.">
        <title>Dimerization properties of the transmembrane domains of Arabidopsis CRINKLY4 receptor-like kinase and homologs.</title>
        <authorList>
            <person name="Stokes K.D."/>
            <person name="Gururaj Rao A."/>
        </authorList>
    </citation>
    <scope>HOMODIMERIZATION</scope>
</reference>
<reference key="6">
    <citation type="journal article" date="2009" name="Mol. Plant">
        <title>Diverse transcriptional programs associated with environmental stress and hormones in the Arabidopsis receptor-like kinase gene family.</title>
        <authorList>
            <person name="Chae L."/>
            <person name="Sudat S."/>
            <person name="Dudoit S."/>
            <person name="Zhu T."/>
            <person name="Luan S."/>
        </authorList>
    </citation>
    <scope>GENE FAMILY</scope>
</reference>
<comment type="function">
    <text>Serine/threonine-protein kinase with low activity.</text>
</comment>
<comment type="catalytic activity">
    <reaction evidence="5">
        <text>L-seryl-[protein] + ATP = O-phospho-L-seryl-[protein] + ADP + H(+)</text>
        <dbReference type="Rhea" id="RHEA:17989"/>
        <dbReference type="Rhea" id="RHEA-COMP:9863"/>
        <dbReference type="Rhea" id="RHEA-COMP:11604"/>
        <dbReference type="ChEBI" id="CHEBI:15378"/>
        <dbReference type="ChEBI" id="CHEBI:29999"/>
        <dbReference type="ChEBI" id="CHEBI:30616"/>
        <dbReference type="ChEBI" id="CHEBI:83421"/>
        <dbReference type="ChEBI" id="CHEBI:456216"/>
        <dbReference type="EC" id="2.7.11.1"/>
    </reaction>
</comment>
<comment type="catalytic activity">
    <reaction evidence="5">
        <text>L-threonyl-[protein] + ATP = O-phospho-L-threonyl-[protein] + ADP + H(+)</text>
        <dbReference type="Rhea" id="RHEA:46608"/>
        <dbReference type="Rhea" id="RHEA-COMP:11060"/>
        <dbReference type="Rhea" id="RHEA-COMP:11605"/>
        <dbReference type="ChEBI" id="CHEBI:15378"/>
        <dbReference type="ChEBI" id="CHEBI:30013"/>
        <dbReference type="ChEBI" id="CHEBI:30616"/>
        <dbReference type="ChEBI" id="CHEBI:61977"/>
        <dbReference type="ChEBI" id="CHEBI:456216"/>
        <dbReference type="EC" id="2.7.11.1"/>
    </reaction>
</comment>
<comment type="subunit">
    <text>Homodimer.</text>
</comment>
<comment type="subcellular location">
    <subcellularLocation>
        <location evidence="6">Membrane</location>
        <topology evidence="6">Single-pass type I membrane protein</topology>
    </subcellularLocation>
</comment>
<comment type="tissue specificity">
    <text evidence="5">Expressed in roots, leaves, shoot apical meristems (SAM), and floral buds.</text>
</comment>
<comment type="similarity">
    <text evidence="3">Belongs to the protein kinase superfamily. Ser/Thr protein kinase family.</text>
</comment>
<comment type="sequence caution" evidence="6">
    <conflict type="miscellaneous discrepancy">
        <sequence resource="EMBL" id="AK228187"/>
    </conflict>
    <text>Sequencing errors.</text>
</comment>